<organism>
    <name type="scientific">Pseudomonas aeruginosa (strain LESB58)</name>
    <dbReference type="NCBI Taxonomy" id="557722"/>
    <lineage>
        <taxon>Bacteria</taxon>
        <taxon>Pseudomonadati</taxon>
        <taxon>Pseudomonadota</taxon>
        <taxon>Gammaproteobacteria</taxon>
        <taxon>Pseudomonadales</taxon>
        <taxon>Pseudomonadaceae</taxon>
        <taxon>Pseudomonas</taxon>
    </lineage>
</organism>
<proteinExistence type="inferred from homology"/>
<accession>B7V4H3</accession>
<evidence type="ECO:0000255" key="1">
    <source>
        <dbReference type="HAMAP-Rule" id="MF_01232"/>
    </source>
</evidence>
<evidence type="ECO:0000256" key="2">
    <source>
        <dbReference type="SAM" id="MobiDB-lite"/>
    </source>
</evidence>
<reference key="1">
    <citation type="journal article" date="2009" name="Genome Res.">
        <title>Newly introduced genomic prophage islands are critical determinants of in vivo competitiveness in the Liverpool epidemic strain of Pseudomonas aeruginosa.</title>
        <authorList>
            <person name="Winstanley C."/>
            <person name="Langille M.G.I."/>
            <person name="Fothergill J.L."/>
            <person name="Kukavica-Ibrulj I."/>
            <person name="Paradis-Bleau C."/>
            <person name="Sanschagrin F."/>
            <person name="Thomson N.R."/>
            <person name="Winsor G.L."/>
            <person name="Quail M.A."/>
            <person name="Lennard N."/>
            <person name="Bignell A."/>
            <person name="Clarke L."/>
            <person name="Seeger K."/>
            <person name="Saunders D."/>
            <person name="Harris D."/>
            <person name="Parkhill J."/>
            <person name="Hancock R.E.W."/>
            <person name="Brinkman F.S.L."/>
            <person name="Levesque R.C."/>
        </authorList>
    </citation>
    <scope>NUCLEOTIDE SEQUENCE [LARGE SCALE GENOMIC DNA]</scope>
    <source>
        <strain>LESB58</strain>
    </source>
</reference>
<protein>
    <recommendedName>
        <fullName evidence="1">UPF0229 protein PLES_05841</fullName>
    </recommendedName>
</protein>
<name>Y584_PSEA8</name>
<feature type="chain" id="PRO_1000139650" description="UPF0229 protein PLES_05841">
    <location>
        <begin position="1"/>
        <end position="423"/>
    </location>
</feature>
<feature type="region of interest" description="Disordered" evidence="2">
    <location>
        <begin position="84"/>
        <end position="107"/>
    </location>
</feature>
<feature type="compositionally biased region" description="Gly residues" evidence="2">
    <location>
        <begin position="92"/>
        <end position="102"/>
    </location>
</feature>
<gene>
    <name type="ordered locus">PLES_05841</name>
</gene>
<sequence length="423" mass="48742">MSYVIDRRLNGKNKSTVNRQRFLRRYREHIKKAVEEAVSRRSITDMEHGEQISIPGRDIDEPVLHHGRGGRQTVVHPGNKEFTAGEHIARPSGGGGGRGGGKASNSGEGMDDFVFQITQEEFLDFMFEDLELPNLVKRHITGTDTFKTVRAGISNDGNPSRINIVRTLRSAHARRIALSGGSRAKLRAALKELERIKREEPDNLGDIQELELEIAKLRARIDRVPFLDTFDLKYNLLVKQPNPTSKAVMFCLMDVSGSMTQATKDIAKRFFILLYLFLKRNYEKIEVVFIRHHTSAREVDEEEFFYSRETGGTIVSSALKMMQEIMAERYPTHEWNIYAAQASDGDNWNDDSPVCRDILLKQIMPFVQYYTYVEITPREHQALWFEYERVREAFEDSFAQQQIVSASDIYPVFRELFQRRLVA</sequence>
<comment type="similarity">
    <text evidence="1">Belongs to the UPF0229 family.</text>
</comment>
<dbReference type="EMBL" id="FM209186">
    <property type="protein sequence ID" value="CAW25311.1"/>
    <property type="molecule type" value="Genomic_DNA"/>
</dbReference>
<dbReference type="RefSeq" id="WP_003099579.1">
    <property type="nucleotide sequence ID" value="NC_011770.1"/>
</dbReference>
<dbReference type="SMR" id="B7V4H3"/>
<dbReference type="KEGG" id="pag:PLES_05841"/>
<dbReference type="HOGENOM" id="CLU_049702_0_0_6"/>
<dbReference type="HAMAP" id="MF_01232">
    <property type="entry name" value="UPF0229"/>
    <property type="match status" value="1"/>
</dbReference>
<dbReference type="InterPro" id="IPR006698">
    <property type="entry name" value="UPF0229"/>
</dbReference>
<dbReference type="NCBIfam" id="NF003707">
    <property type="entry name" value="PRK05325.1-2"/>
    <property type="match status" value="1"/>
</dbReference>
<dbReference type="NCBIfam" id="NF003708">
    <property type="entry name" value="PRK05325.1-3"/>
    <property type="match status" value="1"/>
</dbReference>
<dbReference type="PANTHER" id="PTHR30510">
    <property type="entry name" value="UPF0229 PROTEIN YEAH"/>
    <property type="match status" value="1"/>
</dbReference>
<dbReference type="PANTHER" id="PTHR30510:SF2">
    <property type="entry name" value="UPF0229 PROTEIN YEAH"/>
    <property type="match status" value="1"/>
</dbReference>
<dbReference type="Pfam" id="PF04285">
    <property type="entry name" value="DUF444"/>
    <property type="match status" value="1"/>
</dbReference>